<feature type="chain" id="PRO_1000205831" description="Large ribosomal subunit protein bL34">
    <location>
        <begin position="1"/>
        <end position="46"/>
    </location>
</feature>
<protein>
    <recommendedName>
        <fullName evidence="1">Large ribosomal subunit protein bL34</fullName>
    </recommendedName>
    <alternativeName>
        <fullName evidence="2">50S ribosomal protein L34</fullName>
    </alternativeName>
</protein>
<gene>
    <name evidence="1" type="primary">rpmH</name>
    <name type="ordered locus">HDEF_2012</name>
</gene>
<reference key="1">
    <citation type="journal article" date="2009" name="Proc. Natl. Acad. Sci. U.S.A.">
        <title>Hamiltonella defensa, genome evolution of protective bacterial endosymbiont from pathogenic ancestors.</title>
        <authorList>
            <person name="Degnan P.H."/>
            <person name="Yu Y."/>
            <person name="Sisneros N."/>
            <person name="Wing R.A."/>
            <person name="Moran N.A."/>
        </authorList>
    </citation>
    <scope>NUCLEOTIDE SEQUENCE [LARGE SCALE GENOMIC DNA]</scope>
    <source>
        <strain>5AT</strain>
    </source>
</reference>
<organism>
    <name type="scientific">Hamiltonella defensa subsp. Acyrthosiphon pisum (strain 5AT)</name>
    <dbReference type="NCBI Taxonomy" id="572265"/>
    <lineage>
        <taxon>Bacteria</taxon>
        <taxon>Pseudomonadati</taxon>
        <taxon>Pseudomonadota</taxon>
        <taxon>Gammaproteobacteria</taxon>
        <taxon>Enterobacterales</taxon>
        <taxon>Enterobacteriaceae</taxon>
        <taxon>aphid secondary symbionts</taxon>
        <taxon>Candidatus Hamiltonella</taxon>
    </lineage>
</organism>
<sequence>MKRTFQPSVLKRNRSHGFRARMANKNGRQVLARRRAKGRTRLTVSH</sequence>
<name>RL34_HAMD5</name>
<dbReference type="EMBL" id="CP001277">
    <property type="protein sequence ID" value="ACQ68591.1"/>
    <property type="molecule type" value="Genomic_DNA"/>
</dbReference>
<dbReference type="RefSeq" id="WP_015874346.1">
    <property type="nucleotide sequence ID" value="NC_012751.1"/>
</dbReference>
<dbReference type="SMR" id="C4K7P8"/>
<dbReference type="STRING" id="572265.HDEF_2012"/>
<dbReference type="GeneID" id="66261568"/>
<dbReference type="KEGG" id="hde:HDEF_2012"/>
<dbReference type="eggNOG" id="COG0230">
    <property type="taxonomic scope" value="Bacteria"/>
</dbReference>
<dbReference type="HOGENOM" id="CLU_129938_2_1_6"/>
<dbReference type="Proteomes" id="UP000002334">
    <property type="component" value="Chromosome"/>
</dbReference>
<dbReference type="GO" id="GO:1990904">
    <property type="term" value="C:ribonucleoprotein complex"/>
    <property type="evidence" value="ECO:0007669"/>
    <property type="project" value="UniProtKB-KW"/>
</dbReference>
<dbReference type="GO" id="GO:0005840">
    <property type="term" value="C:ribosome"/>
    <property type="evidence" value="ECO:0007669"/>
    <property type="project" value="UniProtKB-KW"/>
</dbReference>
<dbReference type="GO" id="GO:0003735">
    <property type="term" value="F:structural constituent of ribosome"/>
    <property type="evidence" value="ECO:0007669"/>
    <property type="project" value="InterPro"/>
</dbReference>
<dbReference type="GO" id="GO:0006412">
    <property type="term" value="P:translation"/>
    <property type="evidence" value="ECO:0007669"/>
    <property type="project" value="UniProtKB-UniRule"/>
</dbReference>
<dbReference type="FunFam" id="1.10.287.3980:FF:000001">
    <property type="entry name" value="Mitochondrial ribosomal protein L34"/>
    <property type="match status" value="1"/>
</dbReference>
<dbReference type="Gene3D" id="1.10.287.3980">
    <property type="match status" value="1"/>
</dbReference>
<dbReference type="HAMAP" id="MF_00391">
    <property type="entry name" value="Ribosomal_bL34"/>
    <property type="match status" value="1"/>
</dbReference>
<dbReference type="InterPro" id="IPR000271">
    <property type="entry name" value="Ribosomal_bL34"/>
</dbReference>
<dbReference type="InterPro" id="IPR020939">
    <property type="entry name" value="Ribosomal_bL34_CS"/>
</dbReference>
<dbReference type="NCBIfam" id="TIGR01030">
    <property type="entry name" value="rpmH_bact"/>
    <property type="match status" value="1"/>
</dbReference>
<dbReference type="PANTHER" id="PTHR14503:SF4">
    <property type="entry name" value="LARGE RIBOSOMAL SUBUNIT PROTEIN BL34M"/>
    <property type="match status" value="1"/>
</dbReference>
<dbReference type="PANTHER" id="PTHR14503">
    <property type="entry name" value="MITOCHONDRIAL RIBOSOMAL PROTEIN 34 FAMILY MEMBER"/>
    <property type="match status" value="1"/>
</dbReference>
<dbReference type="Pfam" id="PF00468">
    <property type="entry name" value="Ribosomal_L34"/>
    <property type="match status" value="1"/>
</dbReference>
<dbReference type="PROSITE" id="PS00784">
    <property type="entry name" value="RIBOSOMAL_L34"/>
    <property type="match status" value="1"/>
</dbReference>
<keyword id="KW-0687">Ribonucleoprotein</keyword>
<keyword id="KW-0689">Ribosomal protein</keyword>
<evidence type="ECO:0000255" key="1">
    <source>
        <dbReference type="HAMAP-Rule" id="MF_00391"/>
    </source>
</evidence>
<evidence type="ECO:0000305" key="2"/>
<proteinExistence type="inferred from homology"/>
<comment type="similarity">
    <text evidence="1">Belongs to the bacterial ribosomal protein bL34 family.</text>
</comment>
<accession>C4K7P8</accession>